<proteinExistence type="inferred from homology"/>
<dbReference type="EC" id="2.1.1.166" evidence="1"/>
<dbReference type="EMBL" id="BA000031">
    <property type="protein sequence ID" value="BAC60727.1"/>
    <property type="molecule type" value="Genomic_DNA"/>
</dbReference>
<dbReference type="RefSeq" id="NP_798843.1">
    <property type="nucleotide sequence ID" value="NC_004603.1"/>
</dbReference>
<dbReference type="RefSeq" id="WP_005480463.1">
    <property type="nucleotide sequence ID" value="NC_004603.1"/>
</dbReference>
<dbReference type="SMR" id="Q87LZ4"/>
<dbReference type="GeneID" id="1189979"/>
<dbReference type="KEGG" id="vpa:VP2464"/>
<dbReference type="PATRIC" id="fig|223926.6.peg.2364"/>
<dbReference type="eggNOG" id="COG0293">
    <property type="taxonomic scope" value="Bacteria"/>
</dbReference>
<dbReference type="HOGENOM" id="CLU_009422_4_0_6"/>
<dbReference type="Proteomes" id="UP000002493">
    <property type="component" value="Chromosome 1"/>
</dbReference>
<dbReference type="GO" id="GO:0005737">
    <property type="term" value="C:cytoplasm"/>
    <property type="evidence" value="ECO:0007669"/>
    <property type="project" value="UniProtKB-SubCell"/>
</dbReference>
<dbReference type="GO" id="GO:0008650">
    <property type="term" value="F:rRNA (uridine-2'-O-)-methyltransferase activity"/>
    <property type="evidence" value="ECO:0007669"/>
    <property type="project" value="UniProtKB-UniRule"/>
</dbReference>
<dbReference type="CDD" id="cd02440">
    <property type="entry name" value="AdoMet_MTases"/>
    <property type="match status" value="1"/>
</dbReference>
<dbReference type="FunFam" id="3.40.50.150:FF:000005">
    <property type="entry name" value="Ribosomal RNA large subunit methyltransferase E"/>
    <property type="match status" value="1"/>
</dbReference>
<dbReference type="Gene3D" id="3.40.50.150">
    <property type="entry name" value="Vaccinia Virus protein VP39"/>
    <property type="match status" value="1"/>
</dbReference>
<dbReference type="HAMAP" id="MF_01547">
    <property type="entry name" value="RNA_methyltr_E"/>
    <property type="match status" value="1"/>
</dbReference>
<dbReference type="InterPro" id="IPR050082">
    <property type="entry name" value="RNA_methyltr_RlmE"/>
</dbReference>
<dbReference type="InterPro" id="IPR002877">
    <property type="entry name" value="RNA_MeTrfase_FtsJ_dom"/>
</dbReference>
<dbReference type="InterPro" id="IPR015507">
    <property type="entry name" value="rRNA-MeTfrase_E"/>
</dbReference>
<dbReference type="InterPro" id="IPR029063">
    <property type="entry name" value="SAM-dependent_MTases_sf"/>
</dbReference>
<dbReference type="NCBIfam" id="NF008390">
    <property type="entry name" value="PRK11188.1"/>
    <property type="match status" value="1"/>
</dbReference>
<dbReference type="PANTHER" id="PTHR10920">
    <property type="entry name" value="RIBOSOMAL RNA METHYLTRANSFERASE"/>
    <property type="match status" value="1"/>
</dbReference>
<dbReference type="PANTHER" id="PTHR10920:SF18">
    <property type="entry name" value="RRNA METHYLTRANSFERASE 2, MITOCHONDRIAL"/>
    <property type="match status" value="1"/>
</dbReference>
<dbReference type="Pfam" id="PF01728">
    <property type="entry name" value="FtsJ"/>
    <property type="match status" value="1"/>
</dbReference>
<dbReference type="PIRSF" id="PIRSF005461">
    <property type="entry name" value="23S_rRNA_mtase"/>
    <property type="match status" value="1"/>
</dbReference>
<dbReference type="SUPFAM" id="SSF53335">
    <property type="entry name" value="S-adenosyl-L-methionine-dependent methyltransferases"/>
    <property type="match status" value="1"/>
</dbReference>
<gene>
    <name evidence="1" type="primary">rlmE</name>
    <name evidence="1" type="synonym">ftsJ</name>
    <name evidence="1" type="synonym">rrmJ</name>
    <name type="ordered locus">VP2464</name>
</gene>
<comment type="function">
    <text evidence="1">Specifically methylates the uridine in position 2552 of 23S rRNA at the 2'-O position of the ribose in the fully assembled 50S ribosomal subunit.</text>
</comment>
<comment type="catalytic activity">
    <reaction evidence="1">
        <text>uridine(2552) in 23S rRNA + S-adenosyl-L-methionine = 2'-O-methyluridine(2552) in 23S rRNA + S-adenosyl-L-homocysteine + H(+)</text>
        <dbReference type="Rhea" id="RHEA:42720"/>
        <dbReference type="Rhea" id="RHEA-COMP:10202"/>
        <dbReference type="Rhea" id="RHEA-COMP:10203"/>
        <dbReference type="ChEBI" id="CHEBI:15378"/>
        <dbReference type="ChEBI" id="CHEBI:57856"/>
        <dbReference type="ChEBI" id="CHEBI:59789"/>
        <dbReference type="ChEBI" id="CHEBI:65315"/>
        <dbReference type="ChEBI" id="CHEBI:74478"/>
        <dbReference type="EC" id="2.1.1.166"/>
    </reaction>
</comment>
<comment type="subcellular location">
    <subcellularLocation>
        <location evidence="1">Cytoplasm</location>
    </subcellularLocation>
</comment>
<comment type="similarity">
    <text evidence="1">Belongs to the class I-like SAM-binding methyltransferase superfamily. RNA methyltransferase RlmE family.</text>
</comment>
<accession>Q87LZ4</accession>
<feature type="chain" id="PRO_0000155548" description="Ribosomal RNA large subunit methyltransferase E">
    <location>
        <begin position="1"/>
        <end position="209"/>
    </location>
</feature>
<feature type="active site" description="Proton acceptor" evidence="1">
    <location>
        <position position="164"/>
    </location>
</feature>
<feature type="binding site" evidence="1">
    <location>
        <position position="63"/>
    </location>
    <ligand>
        <name>S-adenosyl-L-methionine</name>
        <dbReference type="ChEBI" id="CHEBI:59789"/>
    </ligand>
</feature>
<feature type="binding site" evidence="1">
    <location>
        <position position="65"/>
    </location>
    <ligand>
        <name>S-adenosyl-L-methionine</name>
        <dbReference type="ChEBI" id="CHEBI:59789"/>
    </ligand>
</feature>
<feature type="binding site" evidence="1">
    <location>
        <position position="83"/>
    </location>
    <ligand>
        <name>S-adenosyl-L-methionine</name>
        <dbReference type="ChEBI" id="CHEBI:59789"/>
    </ligand>
</feature>
<feature type="binding site" evidence="1">
    <location>
        <position position="99"/>
    </location>
    <ligand>
        <name>S-adenosyl-L-methionine</name>
        <dbReference type="ChEBI" id="CHEBI:59789"/>
    </ligand>
</feature>
<feature type="binding site" evidence="1">
    <location>
        <position position="124"/>
    </location>
    <ligand>
        <name>S-adenosyl-L-methionine</name>
        <dbReference type="ChEBI" id="CHEBI:59789"/>
    </ligand>
</feature>
<evidence type="ECO:0000255" key="1">
    <source>
        <dbReference type="HAMAP-Rule" id="MF_01547"/>
    </source>
</evidence>
<name>RLME_VIBPA</name>
<keyword id="KW-0963">Cytoplasm</keyword>
<keyword id="KW-0489">Methyltransferase</keyword>
<keyword id="KW-0698">rRNA processing</keyword>
<keyword id="KW-0949">S-adenosyl-L-methionine</keyword>
<keyword id="KW-0808">Transferase</keyword>
<reference key="1">
    <citation type="journal article" date="2003" name="Lancet">
        <title>Genome sequence of Vibrio parahaemolyticus: a pathogenic mechanism distinct from that of V. cholerae.</title>
        <authorList>
            <person name="Makino K."/>
            <person name="Oshima K."/>
            <person name="Kurokawa K."/>
            <person name="Yokoyama K."/>
            <person name="Uda T."/>
            <person name="Tagomori K."/>
            <person name="Iijima Y."/>
            <person name="Najima M."/>
            <person name="Nakano M."/>
            <person name="Yamashita A."/>
            <person name="Kubota Y."/>
            <person name="Kimura S."/>
            <person name="Yasunaga T."/>
            <person name="Honda T."/>
            <person name="Shinagawa H."/>
            <person name="Hattori M."/>
            <person name="Iida T."/>
        </authorList>
    </citation>
    <scope>NUCLEOTIDE SEQUENCE [LARGE SCALE GENOMIC DNA]</scope>
    <source>
        <strain>RIMD 2210633</strain>
    </source>
</reference>
<protein>
    <recommendedName>
        <fullName evidence="1">Ribosomal RNA large subunit methyltransferase E</fullName>
        <ecNumber evidence="1">2.1.1.166</ecNumber>
    </recommendedName>
    <alternativeName>
        <fullName evidence="1">23S rRNA Um2552 methyltransferase</fullName>
    </alternativeName>
    <alternativeName>
        <fullName evidence="1">rRNA (uridine-2'-O-)-methyltransferase</fullName>
    </alternativeName>
</protein>
<organism>
    <name type="scientific">Vibrio parahaemolyticus serotype O3:K6 (strain RIMD 2210633)</name>
    <dbReference type="NCBI Taxonomy" id="223926"/>
    <lineage>
        <taxon>Bacteria</taxon>
        <taxon>Pseudomonadati</taxon>
        <taxon>Pseudomonadota</taxon>
        <taxon>Gammaproteobacteria</taxon>
        <taxon>Vibrionales</taxon>
        <taxon>Vibrionaceae</taxon>
        <taxon>Vibrio</taxon>
    </lineage>
</organism>
<sequence>MSKQKHSASSGRWLKEHFDDKYANEARKKGYRSRAYFKIDEIQTKDKLLKPGMTVVDLGAAPGGWSQYAAKIVGDSGQIIACDLLPMDPIAGVSFLQGDFRDDAVLEALLDRIQPLMVDVVMSDMAPNIAGNNSVDQPRAMYLVELALDMCRQVLAPNGSFVVKVFQGEGFDQYVKEVRDMFKVVKIRKPDSSRARSREVFVVATGYKG</sequence>